<keyword id="KW-0963">Cytoplasm</keyword>
<keyword id="KW-0648">Protein biosynthesis</keyword>
<keyword id="KW-0663">Pyridoxal phosphate</keyword>
<keyword id="KW-0711">Selenium</keyword>
<keyword id="KW-0808">Transferase</keyword>
<protein>
    <recommendedName>
        <fullName evidence="1">L-seryl-tRNA(Sec) selenium transferase</fullName>
        <ecNumber evidence="1">2.9.1.1</ecNumber>
    </recommendedName>
    <alternativeName>
        <fullName evidence="1">Selenocysteine synthase</fullName>
        <shortName evidence="1">Sec synthase</shortName>
    </alternativeName>
    <alternativeName>
        <fullName evidence="1">Selenocysteinyl-tRNA(Sec) synthase</fullName>
    </alternativeName>
</protein>
<feature type="chain" id="PRO_0000189609" description="L-seryl-tRNA(Sec) selenium transferase">
    <location>
        <begin position="1"/>
        <end position="470"/>
    </location>
</feature>
<feature type="modified residue" description="N6-(pyridoxal phosphate)lysine" evidence="1">
    <location>
        <position position="292"/>
    </location>
</feature>
<evidence type="ECO:0000255" key="1">
    <source>
        <dbReference type="HAMAP-Rule" id="MF_00423"/>
    </source>
</evidence>
<evidence type="ECO:0000269" key="2">
    <source>
    </source>
</evidence>
<reference key="1">
    <citation type="journal article" date="1998" name="Eur. J. Biochem.">
        <title>Bacterial selenocysteine synthase -- structural and functional properties.</title>
        <authorList>
            <person name="Tormay P."/>
            <person name="Wilting R."/>
            <person name="Lottspeich F."/>
            <person name="Mehta P.K."/>
            <person name="Christen P."/>
            <person name="Boeck A."/>
        </authorList>
    </citation>
    <scope>NUCLEOTIDE SEQUENCE [GENOMIC DNA]</scope>
    <scope>FUNCTION</scope>
    <source>
        <strain>ATCC 35608 / DSM 521 / JCM 9319</strain>
    </source>
</reference>
<accession>O33277</accession>
<gene>
    <name evidence="1" type="primary">selA</name>
</gene>
<comment type="function">
    <text evidence="1 2">Converts seryl-tRNA(Sec) to selenocysteinyl-tRNA(Sec) required for selenoprotein biosynthesis.</text>
</comment>
<comment type="catalytic activity">
    <reaction evidence="1">
        <text>L-seryl-tRNA(Sec) + selenophosphate + H(+) = L-selenocysteinyl-tRNA(Sec) + phosphate</text>
        <dbReference type="Rhea" id="RHEA:22728"/>
        <dbReference type="Rhea" id="RHEA-COMP:9742"/>
        <dbReference type="Rhea" id="RHEA-COMP:9743"/>
        <dbReference type="ChEBI" id="CHEBI:15378"/>
        <dbReference type="ChEBI" id="CHEBI:16144"/>
        <dbReference type="ChEBI" id="CHEBI:43474"/>
        <dbReference type="ChEBI" id="CHEBI:78533"/>
        <dbReference type="ChEBI" id="CHEBI:78573"/>
        <dbReference type="EC" id="2.9.1.1"/>
    </reaction>
</comment>
<comment type="cofactor">
    <cofactor evidence="1">
        <name>pyridoxal 5'-phosphate</name>
        <dbReference type="ChEBI" id="CHEBI:597326"/>
    </cofactor>
</comment>
<comment type="pathway">
    <text evidence="1">Aminoacyl-tRNA biosynthesis; selenocysteinyl-tRNA(Sec) biosynthesis; selenocysteinyl-tRNA(Sec) from L-seryl-tRNA(Sec) (bacterial route): step 1/1.</text>
</comment>
<comment type="subcellular location">
    <subcellularLocation>
        <location evidence="1">Cytoplasm</location>
    </subcellularLocation>
</comment>
<comment type="similarity">
    <text evidence="1">Belongs to the SelA family.</text>
</comment>
<sequence>MESRNLLRQLPAVDQLLQHPRLKDLSRENYKMVLALTRQVLDDWRLKIKNGATTIPDPGQLAREIENRYHEAGRSSLRPVINATGVVLHTNLGRAILSPAARAAALTAAGRYTNLEYDLEKGQRGNRYSHVTGLLKELTGAEEALVVNNNAAAVLLALSTLAAGRETIISRGQLVEIGGSFRIPEVMGQSGTRLVEVGTTNKTYIHDYERAVGPDTALLLKVHPSNYRIQGFTREVTTAELVELGRRVGVPVMEDLGSGFLIDLEAYGITGEPTVQAEINQGVDVVTFSGDKLLGGPQAGIIVGRRDLVAAMAGHPLTRALRIDKMNLAALEATLRAYRNPDRAVKEIPTLAALVALPEDLRLRAEELQKLLTSVLGSRARVGLMPTTSQAGGGSLPVTELPSWAITIRPEQGGAAGLVTALRRTDPPVLARVQDDLLLLDVRTLLPGEGEELARALVQALEGAVHGGES</sequence>
<proteinExistence type="inferred from homology"/>
<organism>
    <name type="scientific">Moorella thermoacetica</name>
    <name type="common">Clostridium thermoaceticum</name>
    <dbReference type="NCBI Taxonomy" id="1525"/>
    <lineage>
        <taxon>Bacteria</taxon>
        <taxon>Bacillati</taxon>
        <taxon>Bacillota</taxon>
        <taxon>Clostridia</taxon>
        <taxon>Moorellales</taxon>
        <taxon>Moorellaceae</taxon>
        <taxon>Moorella</taxon>
    </lineage>
</organism>
<name>SELA_MOOTH</name>
<dbReference type="EC" id="2.9.1.1" evidence="1"/>
<dbReference type="EMBL" id="Y14814">
    <property type="protein sequence ID" value="CAA75096.1"/>
    <property type="molecule type" value="Genomic_DNA"/>
</dbReference>
<dbReference type="RefSeq" id="WP_011393981.1">
    <property type="nucleotide sequence ID" value="NZ_VCDY01000003.1"/>
</dbReference>
<dbReference type="SMR" id="O33277"/>
<dbReference type="GeneID" id="45618542"/>
<dbReference type="PATRIC" id="fig|1525.10.peg.649"/>
<dbReference type="OMA" id="GATNRTH"/>
<dbReference type="UniPathway" id="UPA00906">
    <property type="reaction ID" value="UER00896"/>
</dbReference>
<dbReference type="GO" id="GO:0005737">
    <property type="term" value="C:cytoplasm"/>
    <property type="evidence" value="ECO:0007669"/>
    <property type="project" value="UniProtKB-SubCell"/>
</dbReference>
<dbReference type="GO" id="GO:0004125">
    <property type="term" value="F:L-seryl-tRNA(Sec) selenium transferase activity"/>
    <property type="evidence" value="ECO:0007669"/>
    <property type="project" value="UniProtKB-UniRule"/>
</dbReference>
<dbReference type="GO" id="GO:0001717">
    <property type="term" value="P:conversion of seryl-tRNAsec to selenocys-tRNAsec"/>
    <property type="evidence" value="ECO:0007669"/>
    <property type="project" value="UniProtKB-UniRule"/>
</dbReference>
<dbReference type="GO" id="GO:0001514">
    <property type="term" value="P:selenocysteine incorporation"/>
    <property type="evidence" value="ECO:0007669"/>
    <property type="project" value="UniProtKB-UniRule"/>
</dbReference>
<dbReference type="Gene3D" id="3.90.1150.180">
    <property type="match status" value="1"/>
</dbReference>
<dbReference type="Gene3D" id="3.40.640.10">
    <property type="entry name" value="Type I PLP-dependent aspartate aminotransferase-like (Major domain)"/>
    <property type="match status" value="1"/>
</dbReference>
<dbReference type="HAMAP" id="MF_00423">
    <property type="entry name" value="SelA"/>
    <property type="match status" value="1"/>
</dbReference>
<dbReference type="InterPro" id="IPR015424">
    <property type="entry name" value="PyrdxlP-dep_Trfase"/>
</dbReference>
<dbReference type="InterPro" id="IPR015421">
    <property type="entry name" value="PyrdxlP-dep_Trfase_major"/>
</dbReference>
<dbReference type="InterPro" id="IPR018319">
    <property type="entry name" value="SelA-like"/>
</dbReference>
<dbReference type="InterPro" id="IPR004534">
    <property type="entry name" value="SelA_trans"/>
</dbReference>
<dbReference type="InterPro" id="IPR025862">
    <property type="entry name" value="SelA_trans_N_dom"/>
</dbReference>
<dbReference type="NCBIfam" id="TIGR00474">
    <property type="entry name" value="selA"/>
    <property type="match status" value="1"/>
</dbReference>
<dbReference type="PANTHER" id="PTHR32328">
    <property type="entry name" value="L-SERYL-TRNA(SEC) SELENIUM TRANSFERASE"/>
    <property type="match status" value="1"/>
</dbReference>
<dbReference type="PANTHER" id="PTHR32328:SF0">
    <property type="entry name" value="L-SERYL-TRNA(SEC) SELENIUM TRANSFERASE"/>
    <property type="match status" value="1"/>
</dbReference>
<dbReference type="Pfam" id="PF12390">
    <property type="entry name" value="Se-cys_synth_N"/>
    <property type="match status" value="1"/>
</dbReference>
<dbReference type="Pfam" id="PF03841">
    <property type="entry name" value="SelA"/>
    <property type="match status" value="1"/>
</dbReference>
<dbReference type="SUPFAM" id="SSF53383">
    <property type="entry name" value="PLP-dependent transferases"/>
    <property type="match status" value="1"/>
</dbReference>